<reference key="1">
    <citation type="journal article" date="2009" name="J. Bacteriol.">
        <title>Complete genome sequence of Erythrobacter litoralis HTCC2594.</title>
        <authorList>
            <person name="Oh H.M."/>
            <person name="Giovannoni S.J."/>
            <person name="Ferriera S."/>
            <person name="Johnson J."/>
            <person name="Cho J.C."/>
        </authorList>
    </citation>
    <scope>NUCLEOTIDE SEQUENCE [LARGE SCALE GENOMIC DNA]</scope>
    <source>
        <strain>HTCC2594</strain>
    </source>
</reference>
<sequence length="284" mass="29521">MMADEKKTPENEAETATPAVAVEDALKAEPTETLEAQKAKAEAETPAVAETPSEAAANQSAAQGAEGQPRERGGHDRGGRGGRGGNDRGRGRGGRDNRRGGRREEEDDGIIEKLVHINRVSKTVKGGKRFGFAALVVVGDGQGRVGFGKGKAREVPEAIQKATAAARKKMIRVALKEGRTLHHDGNGRFGAGKVTVRTAPPGTGIIAGGPMRAVFESLGVADVVTKSVGTSNPYNMIRATFDALQDQTSPKSVAQRRGKKVADLLGRGGASEAEAEADAAAIAE</sequence>
<organism>
    <name type="scientific">Erythrobacter litoralis (strain HTCC2594)</name>
    <dbReference type="NCBI Taxonomy" id="314225"/>
    <lineage>
        <taxon>Bacteria</taxon>
        <taxon>Pseudomonadati</taxon>
        <taxon>Pseudomonadota</taxon>
        <taxon>Alphaproteobacteria</taxon>
        <taxon>Sphingomonadales</taxon>
        <taxon>Erythrobacteraceae</taxon>
        <taxon>Erythrobacter/Porphyrobacter group</taxon>
        <taxon>Erythrobacter</taxon>
    </lineage>
</organism>
<accession>Q2N9C8</accession>
<proteinExistence type="inferred from homology"/>
<dbReference type="EMBL" id="CP000157">
    <property type="protein sequence ID" value="ABC63713.1"/>
    <property type="molecule type" value="Genomic_DNA"/>
</dbReference>
<dbReference type="RefSeq" id="WP_011414545.1">
    <property type="nucleotide sequence ID" value="NC_007722.1"/>
</dbReference>
<dbReference type="SMR" id="Q2N9C8"/>
<dbReference type="STRING" id="314225.ELI_08105"/>
<dbReference type="KEGG" id="eli:ELI_08105"/>
<dbReference type="eggNOG" id="COG0098">
    <property type="taxonomic scope" value="Bacteria"/>
</dbReference>
<dbReference type="HOGENOM" id="CLU_065898_2_1_5"/>
<dbReference type="Proteomes" id="UP000008808">
    <property type="component" value="Chromosome"/>
</dbReference>
<dbReference type="GO" id="GO:0015935">
    <property type="term" value="C:small ribosomal subunit"/>
    <property type="evidence" value="ECO:0007669"/>
    <property type="project" value="InterPro"/>
</dbReference>
<dbReference type="GO" id="GO:0019843">
    <property type="term" value="F:rRNA binding"/>
    <property type="evidence" value="ECO:0007669"/>
    <property type="project" value="UniProtKB-UniRule"/>
</dbReference>
<dbReference type="GO" id="GO:0003735">
    <property type="term" value="F:structural constituent of ribosome"/>
    <property type="evidence" value="ECO:0007669"/>
    <property type="project" value="InterPro"/>
</dbReference>
<dbReference type="GO" id="GO:0006412">
    <property type="term" value="P:translation"/>
    <property type="evidence" value="ECO:0007669"/>
    <property type="project" value="UniProtKB-UniRule"/>
</dbReference>
<dbReference type="FunFam" id="3.30.160.20:FF:000001">
    <property type="entry name" value="30S ribosomal protein S5"/>
    <property type="match status" value="1"/>
</dbReference>
<dbReference type="FunFam" id="3.30.230.10:FF:000002">
    <property type="entry name" value="30S ribosomal protein S5"/>
    <property type="match status" value="1"/>
</dbReference>
<dbReference type="Gene3D" id="3.30.160.20">
    <property type="match status" value="1"/>
</dbReference>
<dbReference type="Gene3D" id="3.30.230.10">
    <property type="match status" value="1"/>
</dbReference>
<dbReference type="HAMAP" id="MF_01307_B">
    <property type="entry name" value="Ribosomal_uS5_B"/>
    <property type="match status" value="1"/>
</dbReference>
<dbReference type="InterPro" id="IPR020568">
    <property type="entry name" value="Ribosomal_Su5_D2-typ_SF"/>
</dbReference>
<dbReference type="InterPro" id="IPR000851">
    <property type="entry name" value="Ribosomal_uS5"/>
</dbReference>
<dbReference type="InterPro" id="IPR005712">
    <property type="entry name" value="Ribosomal_uS5_bac-type"/>
</dbReference>
<dbReference type="InterPro" id="IPR005324">
    <property type="entry name" value="Ribosomal_uS5_C"/>
</dbReference>
<dbReference type="InterPro" id="IPR013810">
    <property type="entry name" value="Ribosomal_uS5_N"/>
</dbReference>
<dbReference type="InterPro" id="IPR018192">
    <property type="entry name" value="Ribosomal_uS5_N_CS"/>
</dbReference>
<dbReference type="InterPro" id="IPR014721">
    <property type="entry name" value="Ribsml_uS5_D2-typ_fold_subgr"/>
</dbReference>
<dbReference type="NCBIfam" id="TIGR01021">
    <property type="entry name" value="rpsE_bact"/>
    <property type="match status" value="1"/>
</dbReference>
<dbReference type="PANTHER" id="PTHR48277">
    <property type="entry name" value="MITOCHONDRIAL RIBOSOMAL PROTEIN S5"/>
    <property type="match status" value="1"/>
</dbReference>
<dbReference type="PANTHER" id="PTHR48277:SF1">
    <property type="entry name" value="MITOCHONDRIAL RIBOSOMAL PROTEIN S5"/>
    <property type="match status" value="1"/>
</dbReference>
<dbReference type="Pfam" id="PF00333">
    <property type="entry name" value="Ribosomal_S5"/>
    <property type="match status" value="1"/>
</dbReference>
<dbReference type="Pfam" id="PF03719">
    <property type="entry name" value="Ribosomal_S5_C"/>
    <property type="match status" value="1"/>
</dbReference>
<dbReference type="SUPFAM" id="SSF54768">
    <property type="entry name" value="dsRNA-binding domain-like"/>
    <property type="match status" value="1"/>
</dbReference>
<dbReference type="SUPFAM" id="SSF54211">
    <property type="entry name" value="Ribosomal protein S5 domain 2-like"/>
    <property type="match status" value="1"/>
</dbReference>
<dbReference type="PROSITE" id="PS00585">
    <property type="entry name" value="RIBOSOMAL_S5"/>
    <property type="match status" value="1"/>
</dbReference>
<dbReference type="PROSITE" id="PS50881">
    <property type="entry name" value="S5_DSRBD"/>
    <property type="match status" value="1"/>
</dbReference>
<name>RS5_ERYLH</name>
<feature type="chain" id="PRO_0000323121" description="Small ribosomal subunit protein uS5">
    <location>
        <begin position="1"/>
        <end position="284"/>
    </location>
</feature>
<feature type="domain" description="S5 DRBM" evidence="1">
    <location>
        <begin position="110"/>
        <end position="173"/>
    </location>
</feature>
<feature type="region of interest" description="Disordered" evidence="2">
    <location>
        <begin position="1"/>
        <end position="105"/>
    </location>
</feature>
<feature type="region of interest" description="Disordered" evidence="2">
    <location>
        <begin position="246"/>
        <end position="284"/>
    </location>
</feature>
<feature type="compositionally biased region" description="Basic and acidic residues" evidence="2">
    <location>
        <begin position="1"/>
        <end position="10"/>
    </location>
</feature>
<feature type="compositionally biased region" description="Low complexity" evidence="2">
    <location>
        <begin position="14"/>
        <end position="23"/>
    </location>
</feature>
<feature type="compositionally biased region" description="Basic and acidic residues" evidence="2">
    <location>
        <begin position="24"/>
        <end position="43"/>
    </location>
</feature>
<feature type="compositionally biased region" description="Low complexity" evidence="2">
    <location>
        <begin position="44"/>
        <end position="67"/>
    </location>
</feature>
<feature type="compositionally biased region" description="Basic and acidic residues" evidence="2">
    <location>
        <begin position="68"/>
        <end position="105"/>
    </location>
</feature>
<gene>
    <name evidence="1" type="primary">rpsE</name>
    <name type="ordered locus">ELI_08105</name>
</gene>
<evidence type="ECO:0000255" key="1">
    <source>
        <dbReference type="HAMAP-Rule" id="MF_01307"/>
    </source>
</evidence>
<evidence type="ECO:0000256" key="2">
    <source>
        <dbReference type="SAM" id="MobiDB-lite"/>
    </source>
</evidence>
<evidence type="ECO:0000305" key="3"/>
<comment type="function">
    <text evidence="1">With S4 and S12 plays an important role in translational accuracy.</text>
</comment>
<comment type="function">
    <text evidence="1">Located at the back of the 30S subunit body where it stabilizes the conformation of the head with respect to the body.</text>
</comment>
<comment type="subunit">
    <text evidence="1">Part of the 30S ribosomal subunit. Contacts proteins S4 and S8.</text>
</comment>
<comment type="domain">
    <text>The N-terminal domain interacts with the head of the 30S subunit; the C-terminal domain interacts with the body and contacts protein S4. The interaction surface between S4 and S5 is involved in control of translational fidelity.</text>
</comment>
<comment type="similarity">
    <text evidence="1">Belongs to the universal ribosomal protein uS5 family.</text>
</comment>
<keyword id="KW-1185">Reference proteome</keyword>
<keyword id="KW-0687">Ribonucleoprotein</keyword>
<keyword id="KW-0689">Ribosomal protein</keyword>
<keyword id="KW-0694">RNA-binding</keyword>
<keyword id="KW-0699">rRNA-binding</keyword>
<protein>
    <recommendedName>
        <fullName evidence="1">Small ribosomal subunit protein uS5</fullName>
    </recommendedName>
    <alternativeName>
        <fullName evidence="3">30S ribosomal protein S5</fullName>
    </alternativeName>
</protein>